<accession>Q9EQQ2</accession>
<dbReference type="EMBL" id="AF140226">
    <property type="protein sequence ID" value="AAG48522.1"/>
    <property type="molecule type" value="mRNA"/>
</dbReference>
<dbReference type="EMBL" id="AK010089">
    <property type="protein sequence ID" value="BAB26694.1"/>
    <property type="molecule type" value="mRNA"/>
</dbReference>
<dbReference type="EMBL" id="AK151425">
    <property type="protein sequence ID" value="BAE30389.1"/>
    <property type="molecule type" value="mRNA"/>
</dbReference>
<dbReference type="EMBL" id="AK151461">
    <property type="protein sequence ID" value="BAE30419.1"/>
    <property type="molecule type" value="mRNA"/>
</dbReference>
<dbReference type="EMBL" id="AK152440">
    <property type="protein sequence ID" value="BAE31221.1"/>
    <property type="molecule type" value="mRNA"/>
</dbReference>
<dbReference type="EMBL" id="AK153123">
    <property type="protein sequence ID" value="BAE31738.1"/>
    <property type="molecule type" value="mRNA"/>
</dbReference>
<dbReference type="EMBL" id="AK160004">
    <property type="protein sequence ID" value="BAE35552.1"/>
    <property type="molecule type" value="mRNA"/>
</dbReference>
<dbReference type="EMBL" id="AK167526">
    <property type="protein sequence ID" value="BAE39596.1"/>
    <property type="molecule type" value="mRNA"/>
</dbReference>
<dbReference type="EMBL" id="BC003317">
    <property type="protein sequence ID" value="AAH03317.1"/>
    <property type="molecule type" value="mRNA"/>
</dbReference>
<dbReference type="EMBL" id="BC055301">
    <property type="protein sequence ID" value="AAH55301.1"/>
    <property type="molecule type" value="mRNA"/>
</dbReference>
<dbReference type="CCDS" id="CCDS29207.1"/>
<dbReference type="RefSeq" id="NP_075800.1">
    <property type="nucleotide sequence ID" value="NM_023311.3"/>
</dbReference>
<dbReference type="BioGRID" id="211998">
    <property type="interactions" value="2"/>
</dbReference>
<dbReference type="FunCoup" id="Q9EQQ2">
    <property type="interactions" value="4708"/>
</dbReference>
<dbReference type="STRING" id="10090.ENSMUSP00000025364"/>
<dbReference type="iPTMnet" id="Q9EQQ2"/>
<dbReference type="PhosphoSitePlus" id="Q9EQQ2"/>
<dbReference type="SwissPalm" id="Q9EQQ2"/>
<dbReference type="jPOST" id="Q9EQQ2"/>
<dbReference type="PaxDb" id="10090-ENSMUSP00000025364"/>
<dbReference type="PeptideAtlas" id="Q9EQQ2"/>
<dbReference type="ProteomicsDB" id="299629"/>
<dbReference type="Pumba" id="Q9EQQ2"/>
<dbReference type="Antibodypedia" id="45624">
    <property type="antibodies" value="115 antibodies from 20 providers"/>
</dbReference>
<dbReference type="DNASU" id="67180"/>
<dbReference type="Ensembl" id="ENSMUST00000025364.6">
    <property type="protein sequence ID" value="ENSMUSP00000025364.5"/>
    <property type="gene ID" value="ENSMUSG00000024487.6"/>
</dbReference>
<dbReference type="GeneID" id="67180"/>
<dbReference type="KEGG" id="mmu:67180"/>
<dbReference type="UCSC" id="uc008etd.1">
    <property type="organism name" value="mouse"/>
</dbReference>
<dbReference type="AGR" id="MGI:1914430"/>
<dbReference type="CTD" id="81555"/>
<dbReference type="MGI" id="MGI:1914430">
    <property type="gene designation" value="Yipf5"/>
</dbReference>
<dbReference type="VEuPathDB" id="HostDB:ENSMUSG00000024487"/>
<dbReference type="eggNOG" id="KOG3103">
    <property type="taxonomic scope" value="Eukaryota"/>
</dbReference>
<dbReference type="GeneTree" id="ENSGT00940000153168"/>
<dbReference type="HOGENOM" id="CLU_074741_2_0_1"/>
<dbReference type="InParanoid" id="Q9EQQ2"/>
<dbReference type="OMA" id="HIRAKSM"/>
<dbReference type="OrthoDB" id="440385at2759"/>
<dbReference type="PhylomeDB" id="Q9EQQ2"/>
<dbReference type="TreeFam" id="TF313100"/>
<dbReference type="BioGRID-ORCS" id="67180">
    <property type="hits" value="10 hits in 77 CRISPR screens"/>
</dbReference>
<dbReference type="ChiTaRS" id="Yipf5">
    <property type="organism name" value="mouse"/>
</dbReference>
<dbReference type="PRO" id="PR:Q9EQQ2"/>
<dbReference type="Proteomes" id="UP000000589">
    <property type="component" value="Chromosome 18"/>
</dbReference>
<dbReference type="RNAct" id="Q9EQQ2">
    <property type="molecule type" value="protein"/>
</dbReference>
<dbReference type="Bgee" id="ENSMUSG00000024487">
    <property type="expression patterns" value="Expressed in lacrimal gland and 266 other cell types or tissues"/>
</dbReference>
<dbReference type="GO" id="GO:0030134">
    <property type="term" value="C:COPII-coated ER to Golgi transport vesicle"/>
    <property type="evidence" value="ECO:0000314"/>
    <property type="project" value="MGI"/>
</dbReference>
<dbReference type="GO" id="GO:0070971">
    <property type="term" value="C:endoplasmic reticulum exit site"/>
    <property type="evidence" value="ECO:0000314"/>
    <property type="project" value="MGI"/>
</dbReference>
<dbReference type="GO" id="GO:0005789">
    <property type="term" value="C:endoplasmic reticulum membrane"/>
    <property type="evidence" value="ECO:0007669"/>
    <property type="project" value="UniProtKB-SubCell"/>
</dbReference>
<dbReference type="GO" id="GO:0005794">
    <property type="term" value="C:Golgi apparatus"/>
    <property type="evidence" value="ECO:0007669"/>
    <property type="project" value="UniProtKB-SubCell"/>
</dbReference>
<dbReference type="GO" id="GO:0042175">
    <property type="term" value="C:nuclear outer membrane-endoplasmic reticulum membrane network"/>
    <property type="evidence" value="ECO:0000314"/>
    <property type="project" value="MGI"/>
</dbReference>
<dbReference type="GO" id="GO:0005654">
    <property type="term" value="C:nucleoplasm"/>
    <property type="evidence" value="ECO:0007669"/>
    <property type="project" value="Ensembl"/>
</dbReference>
<dbReference type="GO" id="GO:0006888">
    <property type="term" value="P:endoplasmic reticulum to Golgi vesicle-mediated transport"/>
    <property type="evidence" value="ECO:0007669"/>
    <property type="project" value="InterPro"/>
</dbReference>
<dbReference type="GO" id="GO:0007030">
    <property type="term" value="P:Golgi organization"/>
    <property type="evidence" value="ECO:0000314"/>
    <property type="project" value="MGI"/>
</dbReference>
<dbReference type="GO" id="GO:0030070">
    <property type="term" value="P:insulin processing"/>
    <property type="evidence" value="ECO:0000250"/>
    <property type="project" value="UniProtKB"/>
</dbReference>
<dbReference type="GO" id="GO:0015031">
    <property type="term" value="P:protein transport"/>
    <property type="evidence" value="ECO:0007669"/>
    <property type="project" value="UniProtKB-KW"/>
</dbReference>
<dbReference type="GO" id="GO:0060628">
    <property type="term" value="P:regulation of ER to Golgi vesicle-mediated transport"/>
    <property type="evidence" value="ECO:0000315"/>
    <property type="project" value="MGI"/>
</dbReference>
<dbReference type="InterPro" id="IPR045231">
    <property type="entry name" value="Yip1/4-like"/>
</dbReference>
<dbReference type="InterPro" id="IPR006977">
    <property type="entry name" value="Yip1_dom"/>
</dbReference>
<dbReference type="PANTHER" id="PTHR21236">
    <property type="entry name" value="GOLGI MEMBRANE PROTEIN YIP1"/>
    <property type="match status" value="1"/>
</dbReference>
<dbReference type="PANTHER" id="PTHR21236:SF6">
    <property type="entry name" value="PROTEIN YIPF5"/>
    <property type="match status" value="1"/>
</dbReference>
<dbReference type="Pfam" id="PF04893">
    <property type="entry name" value="Yip1"/>
    <property type="match status" value="1"/>
</dbReference>
<gene>
    <name evidence="8" type="primary">Yipf5</name>
    <name type="synonym">Yip1a</name>
</gene>
<name>YIPF5_MOUSE</name>
<protein>
    <recommendedName>
        <fullName evidence="7">Protein YIPF5</fullName>
    </recommendedName>
    <alternativeName>
        <fullName>YIP1 family member 5</fullName>
    </alternativeName>
    <alternativeName>
        <fullName>YPT-interacting protein 1 A</fullName>
    </alternativeName>
</protein>
<organism>
    <name type="scientific">Mus musculus</name>
    <name type="common">Mouse</name>
    <dbReference type="NCBI Taxonomy" id="10090"/>
    <lineage>
        <taxon>Eukaryota</taxon>
        <taxon>Metazoa</taxon>
        <taxon>Chordata</taxon>
        <taxon>Craniata</taxon>
        <taxon>Vertebrata</taxon>
        <taxon>Euteleostomi</taxon>
        <taxon>Mammalia</taxon>
        <taxon>Eutheria</taxon>
        <taxon>Euarchontoglires</taxon>
        <taxon>Glires</taxon>
        <taxon>Rodentia</taxon>
        <taxon>Myomorpha</taxon>
        <taxon>Muroidea</taxon>
        <taxon>Muridae</taxon>
        <taxon>Murinae</taxon>
        <taxon>Mus</taxon>
        <taxon>Mus</taxon>
    </lineage>
</organism>
<proteinExistence type="evidence at protein level"/>
<sequence>MSGFDNLNSGFYQTSYSIDEQSQQSYDYGGSGGPYSKQYAGCDYSQQGRFVPPDMMQPQQTYTGQIYQPTQAYPPTTPQPFYGDSFEEEPPLLEELGINFDHIWQKTLTVLHPLRAADGSIMNETDLAGPVVFCLAFGATLLLAGKIQFGYVYGISAIGCLGMFCLLNLMSMTGVSFGCVASVLGYCLLPMILLSSFAVVFSLQGMVGILLTATIIGWCSFSASKIFISALAMDGQQLLVAYPCALLYGVFALISVF</sequence>
<keyword id="KW-0968">Cytoplasmic vesicle</keyword>
<keyword id="KW-0256">Endoplasmic reticulum</keyword>
<keyword id="KW-0931">ER-Golgi transport</keyword>
<keyword id="KW-0333">Golgi apparatus</keyword>
<keyword id="KW-0472">Membrane</keyword>
<keyword id="KW-0653">Protein transport</keyword>
<keyword id="KW-1185">Reference proteome</keyword>
<keyword id="KW-0812">Transmembrane</keyword>
<keyword id="KW-1133">Transmembrane helix</keyword>
<keyword id="KW-0813">Transport</keyword>
<feature type="chain" id="PRO_0000234330" description="Protein YIPF5">
    <location>
        <begin position="1"/>
        <end position="257"/>
    </location>
</feature>
<feature type="topological domain" description="Cytoplasmic" evidence="3">
    <location>
        <begin position="1"/>
        <end position="124"/>
    </location>
</feature>
<feature type="transmembrane region" description="Helical" evidence="4">
    <location>
        <begin position="125"/>
        <end position="145"/>
    </location>
</feature>
<feature type="topological domain" description="Lumenal" evidence="7">
    <location>
        <position position="146"/>
    </location>
</feature>
<feature type="transmembrane region" description="Helical" evidence="4">
    <location>
        <begin position="147"/>
        <end position="167"/>
    </location>
</feature>
<feature type="topological domain" description="Cytoplasmic" evidence="7">
    <location>
        <begin position="168"/>
        <end position="173"/>
    </location>
</feature>
<feature type="transmembrane region" description="Helical" evidence="4">
    <location>
        <begin position="174"/>
        <end position="194"/>
    </location>
</feature>
<feature type="topological domain" description="Lumenal" evidence="7">
    <location>
        <begin position="195"/>
        <end position="196"/>
    </location>
</feature>
<feature type="transmembrane region" description="Helical" evidence="4">
    <location>
        <begin position="197"/>
        <end position="217"/>
    </location>
</feature>
<feature type="topological domain" description="Cytoplasmic" evidence="7">
    <location>
        <begin position="218"/>
        <end position="236"/>
    </location>
</feature>
<feature type="transmembrane region" description="Helical" evidence="4">
    <location>
        <begin position="237"/>
        <end position="257"/>
    </location>
</feature>
<feature type="region of interest" description="Interaction with Sec23" evidence="1">
    <location>
        <begin position="75"/>
        <end position="106"/>
    </location>
</feature>
<reference key="1">
    <citation type="journal article" date="2001" name="J. Biol. Chem.">
        <title>A membrane protein enriched in endoplasmic reticulum exit sites interacts with COPII.</title>
        <authorList>
            <person name="Tang B.L."/>
            <person name="Ong Y.S."/>
            <person name="Huang B."/>
            <person name="Wei S."/>
            <person name="Wong E.T."/>
            <person name="Qi R."/>
            <person name="Horstmann H."/>
            <person name="Hong W."/>
        </authorList>
    </citation>
    <scope>NUCLEOTIDE SEQUENCE [MRNA]</scope>
    <scope>TISSUE SPECIFICITY</scope>
</reference>
<reference key="2">
    <citation type="journal article" date="2005" name="Science">
        <title>The transcriptional landscape of the mammalian genome.</title>
        <authorList>
            <person name="Carninci P."/>
            <person name="Kasukawa T."/>
            <person name="Katayama S."/>
            <person name="Gough J."/>
            <person name="Frith M.C."/>
            <person name="Maeda N."/>
            <person name="Oyama R."/>
            <person name="Ravasi T."/>
            <person name="Lenhard B."/>
            <person name="Wells C."/>
            <person name="Kodzius R."/>
            <person name="Shimokawa K."/>
            <person name="Bajic V.B."/>
            <person name="Brenner S.E."/>
            <person name="Batalov S."/>
            <person name="Forrest A.R."/>
            <person name="Zavolan M."/>
            <person name="Davis M.J."/>
            <person name="Wilming L.G."/>
            <person name="Aidinis V."/>
            <person name="Allen J.E."/>
            <person name="Ambesi-Impiombato A."/>
            <person name="Apweiler R."/>
            <person name="Aturaliya R.N."/>
            <person name="Bailey T.L."/>
            <person name="Bansal M."/>
            <person name="Baxter L."/>
            <person name="Beisel K.W."/>
            <person name="Bersano T."/>
            <person name="Bono H."/>
            <person name="Chalk A.M."/>
            <person name="Chiu K.P."/>
            <person name="Choudhary V."/>
            <person name="Christoffels A."/>
            <person name="Clutterbuck D.R."/>
            <person name="Crowe M.L."/>
            <person name="Dalla E."/>
            <person name="Dalrymple B.P."/>
            <person name="de Bono B."/>
            <person name="Della Gatta G."/>
            <person name="di Bernardo D."/>
            <person name="Down T."/>
            <person name="Engstrom P."/>
            <person name="Fagiolini M."/>
            <person name="Faulkner G."/>
            <person name="Fletcher C.F."/>
            <person name="Fukushima T."/>
            <person name="Furuno M."/>
            <person name="Futaki S."/>
            <person name="Gariboldi M."/>
            <person name="Georgii-Hemming P."/>
            <person name="Gingeras T.R."/>
            <person name="Gojobori T."/>
            <person name="Green R.E."/>
            <person name="Gustincich S."/>
            <person name="Harbers M."/>
            <person name="Hayashi Y."/>
            <person name="Hensch T.K."/>
            <person name="Hirokawa N."/>
            <person name="Hill D."/>
            <person name="Huminiecki L."/>
            <person name="Iacono M."/>
            <person name="Ikeo K."/>
            <person name="Iwama A."/>
            <person name="Ishikawa T."/>
            <person name="Jakt M."/>
            <person name="Kanapin A."/>
            <person name="Katoh M."/>
            <person name="Kawasawa Y."/>
            <person name="Kelso J."/>
            <person name="Kitamura H."/>
            <person name="Kitano H."/>
            <person name="Kollias G."/>
            <person name="Krishnan S.P."/>
            <person name="Kruger A."/>
            <person name="Kummerfeld S.K."/>
            <person name="Kurochkin I.V."/>
            <person name="Lareau L.F."/>
            <person name="Lazarevic D."/>
            <person name="Lipovich L."/>
            <person name="Liu J."/>
            <person name="Liuni S."/>
            <person name="McWilliam S."/>
            <person name="Madan Babu M."/>
            <person name="Madera M."/>
            <person name="Marchionni L."/>
            <person name="Matsuda H."/>
            <person name="Matsuzawa S."/>
            <person name="Miki H."/>
            <person name="Mignone F."/>
            <person name="Miyake S."/>
            <person name="Morris K."/>
            <person name="Mottagui-Tabar S."/>
            <person name="Mulder N."/>
            <person name="Nakano N."/>
            <person name="Nakauchi H."/>
            <person name="Ng P."/>
            <person name="Nilsson R."/>
            <person name="Nishiguchi S."/>
            <person name="Nishikawa S."/>
            <person name="Nori F."/>
            <person name="Ohara O."/>
            <person name="Okazaki Y."/>
            <person name="Orlando V."/>
            <person name="Pang K.C."/>
            <person name="Pavan W.J."/>
            <person name="Pavesi G."/>
            <person name="Pesole G."/>
            <person name="Petrovsky N."/>
            <person name="Piazza S."/>
            <person name="Reed J."/>
            <person name="Reid J.F."/>
            <person name="Ring B.Z."/>
            <person name="Ringwald M."/>
            <person name="Rost B."/>
            <person name="Ruan Y."/>
            <person name="Salzberg S.L."/>
            <person name="Sandelin A."/>
            <person name="Schneider C."/>
            <person name="Schoenbach C."/>
            <person name="Sekiguchi K."/>
            <person name="Semple C.A."/>
            <person name="Seno S."/>
            <person name="Sessa L."/>
            <person name="Sheng Y."/>
            <person name="Shibata Y."/>
            <person name="Shimada H."/>
            <person name="Shimada K."/>
            <person name="Silva D."/>
            <person name="Sinclair B."/>
            <person name="Sperling S."/>
            <person name="Stupka E."/>
            <person name="Sugiura K."/>
            <person name="Sultana R."/>
            <person name="Takenaka Y."/>
            <person name="Taki K."/>
            <person name="Tammoja K."/>
            <person name="Tan S.L."/>
            <person name="Tang S."/>
            <person name="Taylor M.S."/>
            <person name="Tegner J."/>
            <person name="Teichmann S.A."/>
            <person name="Ueda H.R."/>
            <person name="van Nimwegen E."/>
            <person name="Verardo R."/>
            <person name="Wei C.L."/>
            <person name="Yagi K."/>
            <person name="Yamanishi H."/>
            <person name="Zabarovsky E."/>
            <person name="Zhu S."/>
            <person name="Zimmer A."/>
            <person name="Hide W."/>
            <person name="Bult C."/>
            <person name="Grimmond S.M."/>
            <person name="Teasdale R.D."/>
            <person name="Liu E.T."/>
            <person name="Brusic V."/>
            <person name="Quackenbush J."/>
            <person name="Wahlestedt C."/>
            <person name="Mattick J.S."/>
            <person name="Hume D.A."/>
            <person name="Kai C."/>
            <person name="Sasaki D."/>
            <person name="Tomaru Y."/>
            <person name="Fukuda S."/>
            <person name="Kanamori-Katayama M."/>
            <person name="Suzuki M."/>
            <person name="Aoki J."/>
            <person name="Arakawa T."/>
            <person name="Iida J."/>
            <person name="Imamura K."/>
            <person name="Itoh M."/>
            <person name="Kato T."/>
            <person name="Kawaji H."/>
            <person name="Kawagashira N."/>
            <person name="Kawashima T."/>
            <person name="Kojima M."/>
            <person name="Kondo S."/>
            <person name="Konno H."/>
            <person name="Nakano K."/>
            <person name="Ninomiya N."/>
            <person name="Nishio T."/>
            <person name="Okada M."/>
            <person name="Plessy C."/>
            <person name="Shibata K."/>
            <person name="Shiraki T."/>
            <person name="Suzuki S."/>
            <person name="Tagami M."/>
            <person name="Waki K."/>
            <person name="Watahiki A."/>
            <person name="Okamura-Oho Y."/>
            <person name="Suzuki H."/>
            <person name="Kawai J."/>
            <person name="Hayashizaki Y."/>
        </authorList>
    </citation>
    <scope>NUCLEOTIDE SEQUENCE [LARGE SCALE MRNA]</scope>
    <source>
        <strain>C57BL/6J</strain>
        <tissue>Bone marrow</tissue>
        <tissue>Placenta</tissue>
        <tissue>Tongue</tissue>
    </source>
</reference>
<reference key="3">
    <citation type="journal article" date="2004" name="Genome Res.">
        <title>The status, quality, and expansion of the NIH full-length cDNA project: the Mammalian Gene Collection (MGC).</title>
        <authorList>
            <consortium name="The MGC Project Team"/>
        </authorList>
    </citation>
    <scope>NUCLEOTIDE SEQUENCE [LARGE SCALE MRNA]</scope>
    <source>
        <strain>129</strain>
        <tissue>Eye</tissue>
        <tissue>Mammary tumor</tissue>
    </source>
</reference>
<reference key="4">
    <citation type="journal article" date="2004" name="Mol. Biol. Cell">
        <title>Cdc2 kinase-dependent disassembly of endoplasmic reticulum (ER) exit sites inhibits ER-to-Golgi vesicular transport during mitosis.</title>
        <authorList>
            <person name="Kano F."/>
            <person name="Tanaka A.R."/>
            <person name="Yamauchi S."/>
            <person name="Kondo H."/>
            <person name="Murata M."/>
        </authorList>
    </citation>
    <scope>SUBCELLULAR LOCATION</scope>
</reference>
<reference key="5">
    <citation type="journal article" date="2010" name="Cell">
        <title>A tissue-specific atlas of mouse protein phosphorylation and expression.</title>
        <authorList>
            <person name="Huttlin E.L."/>
            <person name="Jedrychowski M.P."/>
            <person name="Elias J.E."/>
            <person name="Goswami T."/>
            <person name="Rad R."/>
            <person name="Beausoleil S.A."/>
            <person name="Villen J."/>
            <person name="Haas W."/>
            <person name="Sowa M.E."/>
            <person name="Gygi S.P."/>
        </authorList>
    </citation>
    <scope>IDENTIFICATION BY MASS SPECTROMETRY [LARGE SCALE ANALYSIS]</scope>
    <source>
        <tissue>Pancreas</tissue>
    </source>
</reference>
<evidence type="ECO:0000250" key="1"/>
<evidence type="ECO:0000250" key="2">
    <source>
        <dbReference type="UniProtKB" id="Q5XID0"/>
    </source>
</evidence>
<evidence type="ECO:0000250" key="3">
    <source>
        <dbReference type="UniProtKB" id="Q969M3"/>
    </source>
</evidence>
<evidence type="ECO:0000255" key="4"/>
<evidence type="ECO:0000269" key="5">
    <source>
    </source>
</evidence>
<evidence type="ECO:0000269" key="6">
    <source>
    </source>
</evidence>
<evidence type="ECO:0000305" key="7"/>
<evidence type="ECO:0000312" key="8">
    <source>
        <dbReference type="MGI" id="MGI:1914430"/>
    </source>
</evidence>
<comment type="function">
    <text evidence="3">Plays a role in transport between endoplasmic reticulum and Golgi. In pancreatic beta cells, required to transport proinsulin from endoplasmic reticulum into the Golgi.</text>
</comment>
<comment type="subunit">
    <text evidence="3">Interacts with the COPII coat components Sec23 (SEC23A and/or SEC23B) and Sec24 (SEC24A and/or SEC24B) (By similarity). Interacts with YIF1A (By similarity). May interact with RAB1A (By similarity). Interacts with YIPF3 and YIPF4 (By similarity).</text>
</comment>
<comment type="subcellular location">
    <subcellularLocation>
        <location evidence="6">Golgi apparatus</location>
        <location evidence="6">cis-Golgi network membrane</location>
        <topology evidence="6">Multi-pass membrane protein</topology>
    </subcellularLocation>
    <subcellularLocation>
        <location evidence="2">Cytoplasmic vesicle</location>
        <location evidence="2">COPII-coated vesicle</location>
    </subcellularLocation>
    <subcellularLocation>
        <location evidence="6">Endoplasmic reticulum membrane</location>
        <topology evidence="6">Multi-pass membrane protein</topology>
    </subcellularLocation>
    <text evidence="2 6">Enriched at the endoplasmic reticulum exit sites (PubMed:15254263). Incorporated into COPII coated vesicles (By similarity).</text>
</comment>
<comment type="tissue specificity">
    <text evidence="5">Ubiquitously expressed.</text>
</comment>
<comment type="similarity">
    <text evidence="7">Belongs to the YIP1 family.</text>
</comment>